<feature type="chain" id="PRO_0000024318" description="Serine/threonine-protein kinase cot-1">
    <location>
        <begin position="1"/>
        <end position="598"/>
    </location>
</feature>
<feature type="domain" description="Protein kinase" evidence="1">
    <location>
        <begin position="214"/>
        <end position="518"/>
    </location>
</feature>
<feature type="domain" description="AGC-kinase C-terminal" evidence="2">
    <location>
        <begin position="519"/>
        <end position="598"/>
    </location>
</feature>
<feature type="region of interest" description="Disordered" evidence="4">
    <location>
        <begin position="1"/>
        <end position="46"/>
    </location>
</feature>
<feature type="region of interest" description="Disordered" evidence="4">
    <location>
        <begin position="80"/>
        <end position="148"/>
    </location>
</feature>
<feature type="region of interest" description="Disordered" evidence="4">
    <location>
        <begin position="163"/>
        <end position="190"/>
    </location>
</feature>
<feature type="compositionally biased region" description="Polar residues" evidence="4">
    <location>
        <begin position="1"/>
        <end position="16"/>
    </location>
</feature>
<feature type="compositionally biased region" description="Polar residues" evidence="4">
    <location>
        <begin position="24"/>
        <end position="33"/>
    </location>
</feature>
<feature type="compositionally biased region" description="Polar residues" evidence="4">
    <location>
        <begin position="99"/>
        <end position="126"/>
    </location>
</feature>
<feature type="active site" description="Proton acceptor" evidence="1 3">
    <location>
        <position position="337"/>
    </location>
</feature>
<feature type="binding site" evidence="1">
    <location>
        <begin position="220"/>
        <end position="228"/>
    </location>
    <ligand>
        <name>ATP</name>
        <dbReference type="ChEBI" id="CHEBI:30616"/>
    </ligand>
</feature>
<feature type="binding site" evidence="1">
    <location>
        <position position="243"/>
    </location>
    <ligand>
        <name>ATP</name>
        <dbReference type="ChEBI" id="CHEBI:30616"/>
    </ligand>
</feature>
<feature type="splice variant" id="VSP_018837" description="In isoform Short." evidence="5">
    <location>
        <begin position="1"/>
        <end position="118"/>
    </location>
</feature>
<protein>
    <recommendedName>
        <fullName>Serine/threonine-protein kinase cot-1</fullName>
        <ecNumber>2.7.11.1</ecNumber>
    </recommendedName>
    <alternativeName>
        <fullName>Colonial temperature-sensitive protein 1</fullName>
    </alternativeName>
</protein>
<name>COT1_NEUCR</name>
<organism>
    <name type="scientific">Neurospora crassa (strain ATCC 24698 / 74-OR23-1A / CBS 708.71 / DSM 1257 / FGSC 987)</name>
    <dbReference type="NCBI Taxonomy" id="367110"/>
    <lineage>
        <taxon>Eukaryota</taxon>
        <taxon>Fungi</taxon>
        <taxon>Dikarya</taxon>
        <taxon>Ascomycota</taxon>
        <taxon>Pezizomycotina</taxon>
        <taxon>Sordariomycetes</taxon>
        <taxon>Sordariomycetidae</taxon>
        <taxon>Sordariales</taxon>
        <taxon>Sordariaceae</taxon>
        <taxon>Neurospora</taxon>
    </lineage>
</organism>
<evidence type="ECO:0000255" key="1">
    <source>
        <dbReference type="PROSITE-ProRule" id="PRU00159"/>
    </source>
</evidence>
<evidence type="ECO:0000255" key="2">
    <source>
        <dbReference type="PROSITE-ProRule" id="PRU00618"/>
    </source>
</evidence>
<evidence type="ECO:0000255" key="3">
    <source>
        <dbReference type="PROSITE-ProRule" id="PRU10027"/>
    </source>
</evidence>
<evidence type="ECO:0000256" key="4">
    <source>
        <dbReference type="SAM" id="MobiDB-lite"/>
    </source>
</evidence>
<evidence type="ECO:0000305" key="5"/>
<sequence length="598" mass="68017">MDNTNRPHLNLGTNDTRMAPNDRTYPTTPSTFPQPVFPGQQAGGSQQYNQAYAQSGNYYQQNHNDPNTGLAHQFAHQNIGSAGRASPYGSRGPSPAQRPRTSGNSGQQQTYGNYLSAPMPSNTQTEFAPAPERNPDKYGPNANNNQKKCSQLASDFFKDSVKRARERNQRQSEMEQKLGETNDARRRESIWSTAGRKEGQYLRFLRTKDKPENYQTIKIIGKGAFGEVKLVQKKADGKVYAMKSLIKTEMFKKDQLAHVRAERDILAESDSPWVVKLYTTFQDANFLYMLMEFLPGGDLMTMLIKYEIFSEDITRFYIAEIVLAIDAVHKLGFIHRDIKPDNILLDRGGHVKLTDFGLSTGFHKLHDNNYYTQLLQGKSNKPRDNRNSVAIDQINLTVSNRAQINDWRRSRRLMAYSTVGTPDYIAPEIFTGHGYSFDCDWWSLGTIMFECLVGWPPFCAEDSHDTYRKIVNWRHSLYFPDDITLGVDAENLIRSLICNTENRLGRGGAHEIKSHAFFRGVEFDSLRRIRAPFEPRLTSAIDTTYFPTDEIDQTDNATLLKAQQAARGAAAPAQQEESPELSLPFIGYTFKRFDNNFR</sequence>
<accession>P38679</accession>
<accession>P79080</accession>
<accession>Q7S972</accession>
<proteinExistence type="evidence at transcript level"/>
<keyword id="KW-0024">Alternative initiation</keyword>
<keyword id="KW-0067">ATP-binding</keyword>
<keyword id="KW-0418">Kinase</keyword>
<keyword id="KW-0547">Nucleotide-binding</keyword>
<keyword id="KW-0597">Phosphoprotein</keyword>
<keyword id="KW-1185">Reference proteome</keyword>
<keyword id="KW-0723">Serine/threonine-protein kinase</keyword>
<keyword id="KW-0808">Transferase</keyword>
<gene>
    <name type="primary">cot-1</name>
    <name type="ORF">NCU07296</name>
</gene>
<dbReference type="EC" id="2.7.11.1"/>
<dbReference type="EMBL" id="X97657">
    <property type="protein sequence ID" value="CAA66253.1"/>
    <property type="molecule type" value="mRNA"/>
</dbReference>
<dbReference type="EMBL" id="X97657">
    <property type="protein sequence ID" value="CAA66254.1"/>
    <property type="molecule type" value="mRNA"/>
</dbReference>
<dbReference type="EMBL" id="CM002239">
    <property type="protein sequence ID" value="EAA32914.2"/>
    <property type="molecule type" value="Genomic_DNA"/>
</dbReference>
<dbReference type="PIR" id="S22711">
    <property type="entry name" value="S22711"/>
</dbReference>
<dbReference type="PIR" id="T47254">
    <property type="entry name" value="T47254"/>
</dbReference>
<dbReference type="PIR" id="T47255">
    <property type="entry name" value="T47255"/>
</dbReference>
<dbReference type="RefSeq" id="XP_962150.2">
    <molecule id="P38679-1"/>
    <property type="nucleotide sequence ID" value="XM_957057.2"/>
</dbReference>
<dbReference type="SMR" id="P38679"/>
<dbReference type="FunCoup" id="P38679">
    <property type="interactions" value="514"/>
</dbReference>
<dbReference type="STRING" id="367110.P38679"/>
<dbReference type="PaxDb" id="5141-EFNCRP00000007107"/>
<dbReference type="EnsemblFungi" id="EAA32914">
    <molecule id="P38679-1"/>
    <property type="protein sequence ID" value="EAA32914"/>
    <property type="gene ID" value="NCU07296"/>
</dbReference>
<dbReference type="GeneID" id="3878299"/>
<dbReference type="KEGG" id="ncr:NCU07296"/>
<dbReference type="VEuPathDB" id="FungiDB:NCU07296"/>
<dbReference type="HOGENOM" id="CLU_000288_67_5_1"/>
<dbReference type="InParanoid" id="P38679"/>
<dbReference type="OrthoDB" id="3638488at2759"/>
<dbReference type="BRENDA" id="2.7.11.1">
    <property type="organism ID" value="3627"/>
</dbReference>
<dbReference type="Proteomes" id="UP000001805">
    <property type="component" value="Chromosome 4, Linkage Group IV"/>
</dbReference>
<dbReference type="GO" id="GO:0051285">
    <property type="term" value="C:cell cortex of cell tip"/>
    <property type="evidence" value="ECO:0007669"/>
    <property type="project" value="EnsemblFungi"/>
</dbReference>
<dbReference type="GO" id="GO:0032153">
    <property type="term" value="C:cell division site"/>
    <property type="evidence" value="ECO:0007669"/>
    <property type="project" value="EnsemblFungi"/>
</dbReference>
<dbReference type="GO" id="GO:0005935">
    <property type="term" value="C:cellular bud neck"/>
    <property type="evidence" value="ECO:0007669"/>
    <property type="project" value="EnsemblFungi"/>
</dbReference>
<dbReference type="GO" id="GO:0005934">
    <property type="term" value="C:cellular bud tip"/>
    <property type="evidence" value="ECO:0007669"/>
    <property type="project" value="EnsemblFungi"/>
</dbReference>
<dbReference type="GO" id="GO:0035838">
    <property type="term" value="C:growing cell tip"/>
    <property type="evidence" value="ECO:0007669"/>
    <property type="project" value="EnsemblFungi"/>
</dbReference>
<dbReference type="GO" id="GO:0000131">
    <property type="term" value="C:incipient cellular bud site"/>
    <property type="evidence" value="ECO:0007669"/>
    <property type="project" value="EnsemblFungi"/>
</dbReference>
<dbReference type="GO" id="GO:0043332">
    <property type="term" value="C:mating projection tip"/>
    <property type="evidence" value="ECO:0007669"/>
    <property type="project" value="EnsemblFungi"/>
</dbReference>
<dbReference type="GO" id="GO:0005634">
    <property type="term" value="C:nucleus"/>
    <property type="evidence" value="ECO:0007669"/>
    <property type="project" value="EnsemblFungi"/>
</dbReference>
<dbReference type="GO" id="GO:0005886">
    <property type="term" value="C:plasma membrane"/>
    <property type="evidence" value="ECO:0000314"/>
    <property type="project" value="CACAO"/>
</dbReference>
<dbReference type="GO" id="GO:1902554">
    <property type="term" value="C:serine/threonine protein kinase complex"/>
    <property type="evidence" value="ECO:0007669"/>
    <property type="project" value="EnsemblFungi"/>
</dbReference>
<dbReference type="GO" id="GO:0005524">
    <property type="term" value="F:ATP binding"/>
    <property type="evidence" value="ECO:0007669"/>
    <property type="project" value="UniProtKB-KW"/>
</dbReference>
<dbReference type="GO" id="GO:0042802">
    <property type="term" value="F:identical protein binding"/>
    <property type="evidence" value="ECO:0007669"/>
    <property type="project" value="EnsemblFungi"/>
</dbReference>
<dbReference type="GO" id="GO:0106310">
    <property type="term" value="F:protein serine kinase activity"/>
    <property type="evidence" value="ECO:0007669"/>
    <property type="project" value="RHEA"/>
</dbReference>
<dbReference type="GO" id="GO:0004674">
    <property type="term" value="F:protein serine/threonine kinase activity"/>
    <property type="evidence" value="ECO:0000318"/>
    <property type="project" value="GO_Central"/>
</dbReference>
<dbReference type="GO" id="GO:0007118">
    <property type="term" value="P:budding cell apical bud growth"/>
    <property type="evidence" value="ECO:0007669"/>
    <property type="project" value="EnsemblFungi"/>
</dbReference>
<dbReference type="GO" id="GO:0071472">
    <property type="term" value="P:cellular response to salt stress"/>
    <property type="evidence" value="ECO:0007669"/>
    <property type="project" value="EnsemblFungi"/>
</dbReference>
<dbReference type="GO" id="GO:0030866">
    <property type="term" value="P:cortical actin cytoskeleton organization"/>
    <property type="evidence" value="ECO:0007669"/>
    <property type="project" value="EnsemblFungi"/>
</dbReference>
<dbReference type="GO" id="GO:0030950">
    <property type="term" value="P:establishment or maintenance of actin cytoskeleton polarity"/>
    <property type="evidence" value="ECO:0007669"/>
    <property type="project" value="EnsemblFungi"/>
</dbReference>
<dbReference type="GO" id="GO:0035556">
    <property type="term" value="P:intracellular signal transduction"/>
    <property type="evidence" value="ECO:0000318"/>
    <property type="project" value="GO_Central"/>
</dbReference>
<dbReference type="GO" id="GO:0097248">
    <property type="term" value="P:maintenance of protein location in cell cortex of cell tip"/>
    <property type="evidence" value="ECO:0007669"/>
    <property type="project" value="EnsemblFungi"/>
</dbReference>
<dbReference type="GO" id="GO:2000247">
    <property type="term" value="P:positive regulation of establishment or maintenance of bipolar cell polarity regulating cell shape"/>
    <property type="evidence" value="ECO:0007669"/>
    <property type="project" value="EnsemblFungi"/>
</dbReference>
<dbReference type="GO" id="GO:0045921">
    <property type="term" value="P:positive regulation of exocytosis"/>
    <property type="evidence" value="ECO:0007669"/>
    <property type="project" value="EnsemblFungi"/>
</dbReference>
<dbReference type="GO" id="GO:0062200">
    <property type="term" value="P:RAM/MOR signaling"/>
    <property type="evidence" value="ECO:0007669"/>
    <property type="project" value="EnsemblFungi"/>
</dbReference>
<dbReference type="GO" id="GO:0032995">
    <property type="term" value="P:regulation of fungal-type cell wall biogenesis"/>
    <property type="evidence" value="ECO:0007669"/>
    <property type="project" value="EnsemblFungi"/>
</dbReference>
<dbReference type="GO" id="GO:0060237">
    <property type="term" value="P:regulation of fungal-type cell wall organization"/>
    <property type="evidence" value="ECO:0007669"/>
    <property type="project" value="EnsemblFungi"/>
</dbReference>
<dbReference type="GO" id="GO:0070507">
    <property type="term" value="P:regulation of microtubule cytoskeleton organization"/>
    <property type="evidence" value="ECO:0007669"/>
    <property type="project" value="EnsemblFungi"/>
</dbReference>
<dbReference type="GO" id="GO:0050708">
    <property type="term" value="P:regulation of protein secretion"/>
    <property type="evidence" value="ECO:0007669"/>
    <property type="project" value="EnsemblFungi"/>
</dbReference>
<dbReference type="GO" id="GO:0000920">
    <property type="term" value="P:septum digestion after cytokinesis"/>
    <property type="evidence" value="ECO:0007669"/>
    <property type="project" value="EnsemblFungi"/>
</dbReference>
<dbReference type="CDD" id="cd21776">
    <property type="entry name" value="MobB_Sid2p-like"/>
    <property type="match status" value="1"/>
</dbReference>
<dbReference type="CDD" id="cd05629">
    <property type="entry name" value="STKc_NDR_like_fungal"/>
    <property type="match status" value="1"/>
</dbReference>
<dbReference type="FunFam" id="1.10.510.10:FF:000086">
    <property type="entry name" value="Non-specific serine/threonine protein kinase"/>
    <property type="match status" value="1"/>
</dbReference>
<dbReference type="FunFam" id="1.10.510.10:FF:000229">
    <property type="entry name" value="Serine/threonine-protein kinase cot-1"/>
    <property type="match status" value="1"/>
</dbReference>
<dbReference type="FunFam" id="3.30.200.20:FF:000192">
    <property type="entry name" value="Serine/threonine-protein kinase cot-1"/>
    <property type="match status" value="1"/>
</dbReference>
<dbReference type="Gene3D" id="3.30.200.20">
    <property type="entry name" value="Phosphorylase Kinase, domain 1"/>
    <property type="match status" value="2"/>
</dbReference>
<dbReference type="Gene3D" id="1.10.510.10">
    <property type="entry name" value="Transferase(Phosphotransferase) domain 1"/>
    <property type="match status" value="2"/>
</dbReference>
<dbReference type="InterPro" id="IPR000961">
    <property type="entry name" value="AGC-kinase_C"/>
</dbReference>
<dbReference type="InterPro" id="IPR011009">
    <property type="entry name" value="Kinase-like_dom_sf"/>
</dbReference>
<dbReference type="InterPro" id="IPR000719">
    <property type="entry name" value="Prot_kinase_dom"/>
</dbReference>
<dbReference type="InterPro" id="IPR017441">
    <property type="entry name" value="Protein_kinase_ATP_BS"/>
</dbReference>
<dbReference type="InterPro" id="IPR050839">
    <property type="entry name" value="Rho-assoc_Ser/Thr_Kinase"/>
</dbReference>
<dbReference type="InterPro" id="IPR008271">
    <property type="entry name" value="Ser/Thr_kinase_AS"/>
</dbReference>
<dbReference type="PANTHER" id="PTHR22988:SF71">
    <property type="entry name" value="CITRON RHO-INTERACTING KINASE"/>
    <property type="match status" value="1"/>
</dbReference>
<dbReference type="PANTHER" id="PTHR22988">
    <property type="entry name" value="MYOTONIC DYSTROPHY S/T KINASE-RELATED"/>
    <property type="match status" value="1"/>
</dbReference>
<dbReference type="Pfam" id="PF00069">
    <property type="entry name" value="Pkinase"/>
    <property type="match status" value="2"/>
</dbReference>
<dbReference type="SMART" id="SM00133">
    <property type="entry name" value="S_TK_X"/>
    <property type="match status" value="1"/>
</dbReference>
<dbReference type="SMART" id="SM00220">
    <property type="entry name" value="S_TKc"/>
    <property type="match status" value="1"/>
</dbReference>
<dbReference type="SUPFAM" id="SSF56112">
    <property type="entry name" value="Protein kinase-like (PK-like)"/>
    <property type="match status" value="1"/>
</dbReference>
<dbReference type="PROSITE" id="PS51285">
    <property type="entry name" value="AGC_KINASE_CTER"/>
    <property type="match status" value="1"/>
</dbReference>
<dbReference type="PROSITE" id="PS00107">
    <property type="entry name" value="PROTEIN_KINASE_ATP"/>
    <property type="match status" value="1"/>
</dbReference>
<dbReference type="PROSITE" id="PS50011">
    <property type="entry name" value="PROTEIN_KINASE_DOM"/>
    <property type="match status" value="1"/>
</dbReference>
<dbReference type="PROSITE" id="PS00108">
    <property type="entry name" value="PROTEIN_KINASE_ST"/>
    <property type="match status" value="1"/>
</dbReference>
<comment type="function">
    <text>Protein kinase required for hyphal elongation.</text>
</comment>
<comment type="catalytic activity">
    <reaction>
        <text>L-seryl-[protein] + ATP = O-phospho-L-seryl-[protein] + ADP + H(+)</text>
        <dbReference type="Rhea" id="RHEA:17989"/>
        <dbReference type="Rhea" id="RHEA-COMP:9863"/>
        <dbReference type="Rhea" id="RHEA-COMP:11604"/>
        <dbReference type="ChEBI" id="CHEBI:15378"/>
        <dbReference type="ChEBI" id="CHEBI:29999"/>
        <dbReference type="ChEBI" id="CHEBI:30616"/>
        <dbReference type="ChEBI" id="CHEBI:83421"/>
        <dbReference type="ChEBI" id="CHEBI:456216"/>
        <dbReference type="EC" id="2.7.11.1"/>
    </reaction>
</comment>
<comment type="catalytic activity">
    <reaction>
        <text>L-threonyl-[protein] + ATP = O-phospho-L-threonyl-[protein] + ADP + H(+)</text>
        <dbReference type="Rhea" id="RHEA:46608"/>
        <dbReference type="Rhea" id="RHEA-COMP:11060"/>
        <dbReference type="Rhea" id="RHEA-COMP:11605"/>
        <dbReference type="ChEBI" id="CHEBI:15378"/>
        <dbReference type="ChEBI" id="CHEBI:30013"/>
        <dbReference type="ChEBI" id="CHEBI:30616"/>
        <dbReference type="ChEBI" id="CHEBI:61977"/>
        <dbReference type="ChEBI" id="CHEBI:456216"/>
        <dbReference type="EC" id="2.7.11.1"/>
    </reaction>
</comment>
<comment type="alternative products">
    <event type="alternative initiation"/>
    <isoform>
        <id>P38679-1</id>
        <name>Long</name>
        <sequence type="displayed"/>
    </isoform>
    <isoform>
        <id>P38679-2</id>
        <name>Short</name>
        <sequence type="described" ref="VSP_018837"/>
    </isoform>
</comment>
<comment type="miscellaneous">
    <molecule>Isoform Long</molecule>
    <text>Produced preferentially in dark grown mycelia.</text>
</comment>
<comment type="miscellaneous">
    <molecule>Isoform Short</molecule>
    <text evidence="5">Produced preferentially in illuminated mycelia.</text>
</comment>
<comment type="similarity">
    <text evidence="5">Belongs to the protein kinase superfamily. STE Ser/Thr protein kinase family. COT1 subfamily.</text>
</comment>
<reference key="1">
    <citation type="journal article" date="1992" name="EMBO J.">
        <title>cot-1, a gene required for hyphal elongation in Neurospora crassa, encodes a protein kinase.</title>
        <authorList>
            <person name="Yarden O."/>
            <person name="Plamann M."/>
            <person name="Ebbole D.J."/>
            <person name="Yanofsky C."/>
        </authorList>
    </citation>
    <scope>NUCLEOTIDE SEQUENCE [GENOMIC DNA]</scope>
</reference>
<reference key="2">
    <citation type="journal article" date="1998" name="Fungal Genet. Biol.">
        <title>Photoregulation of cot-1, a kinase-encoding gene involved in hyphal growth in Neurospora crassa.</title>
        <authorList>
            <person name="Lauter F.-R."/>
            <person name="Marchfelder U."/>
            <person name="Russo V.E.A."/>
            <person name="Yamashiro C.T."/>
            <person name="Yatzkan E."/>
            <person name="Yarden O."/>
        </authorList>
    </citation>
    <scope>NUCLEOTIDE SEQUENCE [MRNA]</scope>
    <scope>SEQUENCE REVISION</scope>
    <scope>ALTERNATIVE INITIATION</scope>
    <source>
        <strain>74-OR23-1VA / FGSC 2489</strain>
    </source>
</reference>
<reference key="3">
    <citation type="journal article" date="2003" name="Nature">
        <title>The genome sequence of the filamentous fungus Neurospora crassa.</title>
        <authorList>
            <person name="Galagan J.E."/>
            <person name="Calvo S.E."/>
            <person name="Borkovich K.A."/>
            <person name="Selker E.U."/>
            <person name="Read N.D."/>
            <person name="Jaffe D.B."/>
            <person name="FitzHugh W."/>
            <person name="Ma L.-J."/>
            <person name="Smirnov S."/>
            <person name="Purcell S."/>
            <person name="Rehman B."/>
            <person name="Elkins T."/>
            <person name="Engels R."/>
            <person name="Wang S."/>
            <person name="Nielsen C.B."/>
            <person name="Butler J."/>
            <person name="Endrizzi M."/>
            <person name="Qui D."/>
            <person name="Ianakiev P."/>
            <person name="Bell-Pedersen D."/>
            <person name="Nelson M.A."/>
            <person name="Werner-Washburne M."/>
            <person name="Selitrennikoff C.P."/>
            <person name="Kinsey J.A."/>
            <person name="Braun E.L."/>
            <person name="Zelter A."/>
            <person name="Schulte U."/>
            <person name="Kothe G.O."/>
            <person name="Jedd G."/>
            <person name="Mewes H.-W."/>
            <person name="Staben C."/>
            <person name="Marcotte E."/>
            <person name="Greenberg D."/>
            <person name="Roy A."/>
            <person name="Foley K."/>
            <person name="Naylor J."/>
            <person name="Stange-Thomann N."/>
            <person name="Barrett R."/>
            <person name="Gnerre S."/>
            <person name="Kamal M."/>
            <person name="Kamvysselis M."/>
            <person name="Mauceli E.W."/>
            <person name="Bielke C."/>
            <person name="Rudd S."/>
            <person name="Frishman D."/>
            <person name="Krystofova S."/>
            <person name="Rasmussen C."/>
            <person name="Metzenberg R.L."/>
            <person name="Perkins D.D."/>
            <person name="Kroken S."/>
            <person name="Cogoni C."/>
            <person name="Macino G."/>
            <person name="Catcheside D.E.A."/>
            <person name="Li W."/>
            <person name="Pratt R.J."/>
            <person name="Osmani S.A."/>
            <person name="DeSouza C.P.C."/>
            <person name="Glass N.L."/>
            <person name="Orbach M.J."/>
            <person name="Berglund J.A."/>
            <person name="Voelker R."/>
            <person name="Yarden O."/>
            <person name="Plamann M."/>
            <person name="Seiler S."/>
            <person name="Dunlap J.C."/>
            <person name="Radford A."/>
            <person name="Aramayo R."/>
            <person name="Natvig D.O."/>
            <person name="Alex L.A."/>
            <person name="Mannhaupt G."/>
            <person name="Ebbole D.J."/>
            <person name="Freitag M."/>
            <person name="Paulsen I."/>
            <person name="Sachs M.S."/>
            <person name="Lander E.S."/>
            <person name="Nusbaum C."/>
            <person name="Birren B.W."/>
        </authorList>
    </citation>
    <scope>NUCLEOTIDE SEQUENCE [LARGE SCALE GENOMIC DNA]</scope>
    <source>
        <strain>ATCC 24698 / 74-OR23-1A / CBS 708.71 / DSM 1257 / FGSC 987</strain>
    </source>
</reference>